<dbReference type="EMBL" id="AABR03055900">
    <property type="status" value="NOT_ANNOTATED_CDS"/>
    <property type="molecule type" value="Genomic_DNA"/>
</dbReference>
<dbReference type="EMBL" id="AABR03056151">
    <property type="status" value="NOT_ANNOTATED_CDS"/>
    <property type="molecule type" value="Genomic_DNA"/>
</dbReference>
<dbReference type="EMBL" id="BK001581">
    <property type="protein sequence ID" value="DAA02056.1"/>
    <property type="molecule type" value="mRNA"/>
</dbReference>
<dbReference type="EMBL" id="BK001582">
    <property type="protein sequence ID" value="DAA02057.1"/>
    <property type="molecule type" value="mRNA"/>
</dbReference>
<dbReference type="RefSeq" id="NP_001008815.1">
    <property type="nucleotide sequence ID" value="NM_001008815.2"/>
</dbReference>
<dbReference type="SMR" id="Q6IMF1"/>
<dbReference type="FunCoup" id="Q6IMF1">
    <property type="interactions" value="34"/>
</dbReference>
<dbReference type="STRING" id="10116.ENSRNOP00000038848"/>
<dbReference type="iPTMnet" id="Q6IMF1"/>
<dbReference type="PhosphoSitePlus" id="Q6IMF1"/>
<dbReference type="PaxDb" id="10116-ENSRNOP00000038848"/>
<dbReference type="GeneID" id="315318"/>
<dbReference type="KEGG" id="rno:315318"/>
<dbReference type="UCSC" id="RGD:1359177">
    <property type="organism name" value="rat"/>
</dbReference>
<dbReference type="AGR" id="RGD:1359177"/>
<dbReference type="CTD" id="144501"/>
<dbReference type="RGD" id="1359177">
    <property type="gene designation" value="Krt80"/>
</dbReference>
<dbReference type="VEuPathDB" id="HostDB:ENSRNOG00000025994"/>
<dbReference type="eggNOG" id="ENOG502RVYD">
    <property type="taxonomic scope" value="Eukaryota"/>
</dbReference>
<dbReference type="HOGENOM" id="CLU_012560_5_4_1"/>
<dbReference type="InParanoid" id="Q6IMF1"/>
<dbReference type="OrthoDB" id="66533at9989"/>
<dbReference type="PhylomeDB" id="Q6IMF1"/>
<dbReference type="TreeFam" id="TF317854"/>
<dbReference type="Reactome" id="R-RNO-6805567">
    <property type="pathway name" value="Keratinization"/>
</dbReference>
<dbReference type="Reactome" id="R-RNO-6809371">
    <property type="pathway name" value="Formation of the cornified envelope"/>
</dbReference>
<dbReference type="PRO" id="PR:Q6IMF1"/>
<dbReference type="Proteomes" id="UP000002494">
    <property type="component" value="Chromosome 7"/>
</dbReference>
<dbReference type="Bgee" id="ENSRNOG00000025994">
    <property type="expression patterns" value="Expressed in esophagus and 15 other cell types or tissues"/>
</dbReference>
<dbReference type="GO" id="GO:0005737">
    <property type="term" value="C:cytoplasm"/>
    <property type="evidence" value="ECO:0000266"/>
    <property type="project" value="RGD"/>
</dbReference>
<dbReference type="GO" id="GO:0045095">
    <property type="term" value="C:keratin filament"/>
    <property type="evidence" value="ECO:0000318"/>
    <property type="project" value="GO_Central"/>
</dbReference>
<dbReference type="GO" id="GO:0030280">
    <property type="term" value="F:structural constituent of skin epidermis"/>
    <property type="evidence" value="ECO:0000318"/>
    <property type="project" value="GO_Central"/>
</dbReference>
<dbReference type="GO" id="GO:0045109">
    <property type="term" value="P:intermediate filament organization"/>
    <property type="evidence" value="ECO:0000318"/>
    <property type="project" value="GO_Central"/>
</dbReference>
<dbReference type="GO" id="GO:0031424">
    <property type="term" value="P:keratinization"/>
    <property type="evidence" value="ECO:0000318"/>
    <property type="project" value="GO_Central"/>
</dbReference>
<dbReference type="FunFam" id="1.20.5.1160:FF:000001">
    <property type="entry name" value="Keratin type II"/>
    <property type="match status" value="1"/>
</dbReference>
<dbReference type="FunFam" id="1.20.5.170:FF:000004">
    <property type="entry name" value="Keratin, type II cytoskeletal 5"/>
    <property type="match status" value="1"/>
</dbReference>
<dbReference type="Gene3D" id="1.20.5.170">
    <property type="match status" value="1"/>
</dbReference>
<dbReference type="Gene3D" id="1.20.5.500">
    <property type="entry name" value="Single helix bin"/>
    <property type="match status" value="1"/>
</dbReference>
<dbReference type="Gene3D" id="1.20.5.1160">
    <property type="entry name" value="Vasodilator-stimulated phosphoprotein"/>
    <property type="match status" value="1"/>
</dbReference>
<dbReference type="InterPro" id="IPR039008">
    <property type="entry name" value="IF_rod_dom"/>
</dbReference>
<dbReference type="InterPro" id="IPR032444">
    <property type="entry name" value="Keratin_2_head"/>
</dbReference>
<dbReference type="InterPro" id="IPR003054">
    <property type="entry name" value="Keratin_II"/>
</dbReference>
<dbReference type="PANTHER" id="PTHR45616">
    <property type="entry name" value="GATA-TYPE DOMAIN-CONTAINING PROTEIN"/>
    <property type="match status" value="1"/>
</dbReference>
<dbReference type="PANTHER" id="PTHR45616:SF1">
    <property type="entry name" value="KERATIN, TYPE II CYTOSKELETAL 80"/>
    <property type="match status" value="1"/>
</dbReference>
<dbReference type="Pfam" id="PF00038">
    <property type="entry name" value="Filament"/>
    <property type="match status" value="1"/>
</dbReference>
<dbReference type="Pfam" id="PF16208">
    <property type="entry name" value="Keratin_2_head"/>
    <property type="match status" value="1"/>
</dbReference>
<dbReference type="PRINTS" id="PR01276">
    <property type="entry name" value="TYPE2KERATIN"/>
</dbReference>
<dbReference type="SMART" id="SM01391">
    <property type="entry name" value="Filament"/>
    <property type="match status" value="1"/>
</dbReference>
<dbReference type="SUPFAM" id="SSF64593">
    <property type="entry name" value="Intermediate filament protein, coiled coil region"/>
    <property type="match status" value="2"/>
</dbReference>
<dbReference type="PROSITE" id="PS51842">
    <property type="entry name" value="IF_ROD_2"/>
    <property type="match status" value="1"/>
</dbReference>
<gene>
    <name type="primary">Krt80</name>
    <name type="synonym">Kb20</name>
</gene>
<sequence>MAYRSCVVGFSSHSGCEVTPAGSSQPGTSGWGSCGLPGPGFSSRSLTSCRPAGVIPKVTVNPSLLVPLDLKVDPAVQQQKNQEKEEMKVLNDKFASLIGKVQALEQRNQLLETRWGFLQGQGSATFDLSHHYETFQGRLQEELRKVSQERGQLEASLLQVLEKVEEFRVRYEDEISKRTDLEFTFVQLKKDLDAECLRRTELETKLKGLQGFVELMRTVYEQELKDLTAQVKDVSVTVGLDSRCHIDLSGIVEEVKAQYDAIAARSLEEAEAYSRSQLEERAARSAEFGNSLQSSRCEIADLNVRIQKLRSQIVSVKSHCLKLEENIKVAEEQGELAFQDAKDKMAQLEAALQKAKQDMARQLREYQDLMNTKLALDIEIATYHKLMEGEESRMDLPSTTVVSAVQSRCRTTASKSGLSKTPSRKKKNRGGPVIKITEMSEKYLSQESEASE</sequence>
<name>K2C80_RAT</name>
<protein>
    <recommendedName>
        <fullName>Keratin, type II cytoskeletal 80</fullName>
    </recommendedName>
    <alternativeName>
        <fullName>Cytokeratin-80</fullName>
        <shortName>CK-80</shortName>
    </alternativeName>
    <alternativeName>
        <fullName>Keratin-80</fullName>
        <shortName>K80</shortName>
    </alternativeName>
    <alternativeName>
        <fullName>Type-II keratin Kb20</fullName>
    </alternativeName>
</protein>
<keyword id="KW-0175">Coiled coil</keyword>
<keyword id="KW-0403">Intermediate filament</keyword>
<keyword id="KW-0416">Keratin</keyword>
<keyword id="KW-0597">Phosphoprotein</keyword>
<keyword id="KW-1185">Reference proteome</keyword>
<accession>Q6IMF1</accession>
<comment type="subunit">
    <text>Heterotetramer of two type I and two type II keratins.</text>
</comment>
<comment type="miscellaneous">
    <text>There are two types of cytoskeletal and microfibrillar keratin, I (acidic) and II (neutral to basic) (40-55 and 56-70 kDa, respectively).</text>
</comment>
<comment type="similarity">
    <text evidence="2">Belongs to the intermediate filament family.</text>
</comment>
<feature type="chain" id="PRO_0000314898" description="Keratin, type II cytoskeletal 80">
    <location>
        <begin position="1"/>
        <end position="452"/>
    </location>
</feature>
<feature type="domain" description="IF rod" evidence="2">
    <location>
        <begin position="83"/>
        <end position="394"/>
    </location>
</feature>
<feature type="region of interest" description="Head">
    <location>
        <begin position="1"/>
        <end position="82"/>
    </location>
</feature>
<feature type="region of interest" description="Coil 1A">
    <location>
        <begin position="82"/>
        <end position="118"/>
    </location>
</feature>
<feature type="region of interest" description="Linker 1">
    <location>
        <begin position="119"/>
        <end position="135"/>
    </location>
</feature>
<feature type="region of interest" description="Coil 1B">
    <location>
        <begin position="136"/>
        <end position="227"/>
    </location>
</feature>
<feature type="region of interest" description="Linker 12">
    <location>
        <begin position="228"/>
        <end position="251"/>
    </location>
</feature>
<feature type="region of interest" description="Coil 2">
    <location>
        <begin position="252"/>
        <end position="390"/>
    </location>
</feature>
<feature type="region of interest" description="Tail">
    <location>
        <begin position="391"/>
        <end position="452"/>
    </location>
</feature>
<feature type="region of interest" description="Disordered" evidence="3">
    <location>
        <begin position="411"/>
        <end position="452"/>
    </location>
</feature>
<feature type="compositionally biased region" description="Polar residues" evidence="3">
    <location>
        <begin position="411"/>
        <end position="421"/>
    </location>
</feature>
<feature type="compositionally biased region" description="Polar residues" evidence="3">
    <location>
        <begin position="443"/>
        <end position="452"/>
    </location>
</feature>
<feature type="site" description="Stutter">
    <location>
        <position position="334"/>
    </location>
</feature>
<feature type="modified residue" description="Phosphoserine" evidence="1">
    <location>
        <position position="45"/>
    </location>
</feature>
<reference key="1">
    <citation type="journal article" date="2004" name="Nature">
        <title>Genome sequence of the Brown Norway rat yields insights into mammalian evolution.</title>
        <authorList>
            <person name="Gibbs R.A."/>
            <person name="Weinstock G.M."/>
            <person name="Metzker M.L."/>
            <person name="Muzny D.M."/>
            <person name="Sodergren E.J."/>
            <person name="Scherer S."/>
            <person name="Scott G."/>
            <person name="Steffen D."/>
            <person name="Worley K.C."/>
            <person name="Burch P.E."/>
            <person name="Okwuonu G."/>
            <person name="Hines S."/>
            <person name="Lewis L."/>
            <person name="Deramo C."/>
            <person name="Delgado O."/>
            <person name="Dugan-Rocha S."/>
            <person name="Miner G."/>
            <person name="Morgan M."/>
            <person name="Hawes A."/>
            <person name="Gill R."/>
            <person name="Holt R.A."/>
            <person name="Adams M.D."/>
            <person name="Amanatides P.G."/>
            <person name="Baden-Tillson H."/>
            <person name="Barnstead M."/>
            <person name="Chin S."/>
            <person name="Evans C.A."/>
            <person name="Ferriera S."/>
            <person name="Fosler C."/>
            <person name="Glodek A."/>
            <person name="Gu Z."/>
            <person name="Jennings D."/>
            <person name="Kraft C.L."/>
            <person name="Nguyen T."/>
            <person name="Pfannkoch C.M."/>
            <person name="Sitter C."/>
            <person name="Sutton G.G."/>
            <person name="Venter J.C."/>
            <person name="Woodage T."/>
            <person name="Smith D."/>
            <person name="Lee H.-M."/>
            <person name="Gustafson E."/>
            <person name="Cahill P."/>
            <person name="Kana A."/>
            <person name="Doucette-Stamm L."/>
            <person name="Weinstock K."/>
            <person name="Fechtel K."/>
            <person name="Weiss R.B."/>
            <person name="Dunn D.M."/>
            <person name="Green E.D."/>
            <person name="Blakesley R.W."/>
            <person name="Bouffard G.G."/>
            <person name="De Jong P.J."/>
            <person name="Osoegawa K."/>
            <person name="Zhu B."/>
            <person name="Marra M."/>
            <person name="Schein J."/>
            <person name="Bosdet I."/>
            <person name="Fjell C."/>
            <person name="Jones S."/>
            <person name="Krzywinski M."/>
            <person name="Mathewson C."/>
            <person name="Siddiqui A."/>
            <person name="Wye N."/>
            <person name="McPherson J."/>
            <person name="Zhao S."/>
            <person name="Fraser C.M."/>
            <person name="Shetty J."/>
            <person name="Shatsman S."/>
            <person name="Geer K."/>
            <person name="Chen Y."/>
            <person name="Abramzon S."/>
            <person name="Nierman W.C."/>
            <person name="Havlak P.H."/>
            <person name="Chen R."/>
            <person name="Durbin K.J."/>
            <person name="Egan A."/>
            <person name="Ren Y."/>
            <person name="Song X.-Z."/>
            <person name="Li B."/>
            <person name="Liu Y."/>
            <person name="Qin X."/>
            <person name="Cawley S."/>
            <person name="Cooney A.J."/>
            <person name="D'Souza L.M."/>
            <person name="Martin K."/>
            <person name="Wu J.Q."/>
            <person name="Gonzalez-Garay M.L."/>
            <person name="Jackson A.R."/>
            <person name="Kalafus K.J."/>
            <person name="McLeod M.P."/>
            <person name="Milosavljevic A."/>
            <person name="Virk D."/>
            <person name="Volkov A."/>
            <person name="Wheeler D.A."/>
            <person name="Zhang Z."/>
            <person name="Bailey J.A."/>
            <person name="Eichler E.E."/>
            <person name="Tuzun E."/>
            <person name="Birney E."/>
            <person name="Mongin E."/>
            <person name="Ureta-Vidal A."/>
            <person name="Woodwark C."/>
            <person name="Zdobnov E."/>
            <person name="Bork P."/>
            <person name="Suyama M."/>
            <person name="Torrents D."/>
            <person name="Alexandersson M."/>
            <person name="Trask B.J."/>
            <person name="Young J.M."/>
            <person name="Huang H."/>
            <person name="Wang H."/>
            <person name="Xing H."/>
            <person name="Daniels S."/>
            <person name="Gietzen D."/>
            <person name="Schmidt J."/>
            <person name="Stevens K."/>
            <person name="Vitt U."/>
            <person name="Wingrove J."/>
            <person name="Camara F."/>
            <person name="Mar Alba M."/>
            <person name="Abril J.F."/>
            <person name="Guigo R."/>
            <person name="Smit A."/>
            <person name="Dubchak I."/>
            <person name="Rubin E.M."/>
            <person name="Couronne O."/>
            <person name="Poliakov A."/>
            <person name="Huebner N."/>
            <person name="Ganten D."/>
            <person name="Goesele C."/>
            <person name="Hummel O."/>
            <person name="Kreitler T."/>
            <person name="Lee Y.-A."/>
            <person name="Monti J."/>
            <person name="Schulz H."/>
            <person name="Zimdahl H."/>
            <person name="Himmelbauer H."/>
            <person name="Lehrach H."/>
            <person name="Jacob H.J."/>
            <person name="Bromberg S."/>
            <person name="Gullings-Handley J."/>
            <person name="Jensen-Seaman M.I."/>
            <person name="Kwitek A.E."/>
            <person name="Lazar J."/>
            <person name="Pasko D."/>
            <person name="Tonellato P.J."/>
            <person name="Twigger S."/>
            <person name="Ponting C.P."/>
            <person name="Duarte J.M."/>
            <person name="Rice S."/>
            <person name="Goodstadt L."/>
            <person name="Beatson S.A."/>
            <person name="Emes R.D."/>
            <person name="Winter E.E."/>
            <person name="Webber C."/>
            <person name="Brandt P."/>
            <person name="Nyakatura G."/>
            <person name="Adetobi M."/>
            <person name="Chiaromonte F."/>
            <person name="Elnitski L."/>
            <person name="Eswara P."/>
            <person name="Hardison R.C."/>
            <person name="Hou M."/>
            <person name="Kolbe D."/>
            <person name="Makova K."/>
            <person name="Miller W."/>
            <person name="Nekrutenko A."/>
            <person name="Riemer C."/>
            <person name="Schwartz S."/>
            <person name="Taylor J."/>
            <person name="Yang S."/>
            <person name="Zhang Y."/>
            <person name="Lindpaintner K."/>
            <person name="Andrews T.D."/>
            <person name="Caccamo M."/>
            <person name="Clamp M."/>
            <person name="Clarke L."/>
            <person name="Curwen V."/>
            <person name="Durbin R.M."/>
            <person name="Eyras E."/>
            <person name="Searle S.M."/>
            <person name="Cooper G.M."/>
            <person name="Batzoglou S."/>
            <person name="Brudno M."/>
            <person name="Sidow A."/>
            <person name="Stone E.A."/>
            <person name="Payseur B.A."/>
            <person name="Bourque G."/>
            <person name="Lopez-Otin C."/>
            <person name="Puente X.S."/>
            <person name="Chakrabarti K."/>
            <person name="Chatterji S."/>
            <person name="Dewey C."/>
            <person name="Pachter L."/>
            <person name="Bray N."/>
            <person name="Yap V.B."/>
            <person name="Caspi A."/>
            <person name="Tesler G."/>
            <person name="Pevzner P.A."/>
            <person name="Haussler D."/>
            <person name="Roskin K.M."/>
            <person name="Baertsch R."/>
            <person name="Clawson H."/>
            <person name="Furey T.S."/>
            <person name="Hinrichs A.S."/>
            <person name="Karolchik D."/>
            <person name="Kent W.J."/>
            <person name="Rosenbloom K.R."/>
            <person name="Trumbower H."/>
            <person name="Weirauch M."/>
            <person name="Cooper D.N."/>
            <person name="Stenson P.D."/>
            <person name="Ma B."/>
            <person name="Brent M."/>
            <person name="Arumugam M."/>
            <person name="Shteynberg D."/>
            <person name="Copley R.R."/>
            <person name="Taylor M.S."/>
            <person name="Riethman H."/>
            <person name="Mudunuri U."/>
            <person name="Peterson J."/>
            <person name="Guyer M."/>
            <person name="Felsenfeld A."/>
            <person name="Old S."/>
            <person name="Mockrin S."/>
            <person name="Collins F.S."/>
        </authorList>
    </citation>
    <scope>NUCLEOTIDE SEQUENCE [LARGE SCALE GENOMIC DNA]</scope>
    <source>
        <strain>Brown Norway</strain>
    </source>
</reference>
<reference key="2">
    <citation type="journal article" date="2004" name="Eur. J. Cell Biol.">
        <title>Comprehensive analysis of keratin gene clusters in humans and rodents.</title>
        <authorList>
            <person name="Hesse M."/>
            <person name="Zimek A."/>
            <person name="Weber K."/>
            <person name="Magin T.M."/>
        </authorList>
    </citation>
    <scope>IDENTIFICATION</scope>
</reference>
<proteinExistence type="inferred from homology"/>
<organism>
    <name type="scientific">Rattus norvegicus</name>
    <name type="common">Rat</name>
    <dbReference type="NCBI Taxonomy" id="10116"/>
    <lineage>
        <taxon>Eukaryota</taxon>
        <taxon>Metazoa</taxon>
        <taxon>Chordata</taxon>
        <taxon>Craniata</taxon>
        <taxon>Vertebrata</taxon>
        <taxon>Euteleostomi</taxon>
        <taxon>Mammalia</taxon>
        <taxon>Eutheria</taxon>
        <taxon>Euarchontoglires</taxon>
        <taxon>Glires</taxon>
        <taxon>Rodentia</taxon>
        <taxon>Myomorpha</taxon>
        <taxon>Muroidea</taxon>
        <taxon>Muridae</taxon>
        <taxon>Murinae</taxon>
        <taxon>Rattus</taxon>
    </lineage>
</organism>
<evidence type="ECO:0000250" key="1">
    <source>
        <dbReference type="UniProtKB" id="Q6KB66"/>
    </source>
</evidence>
<evidence type="ECO:0000255" key="2">
    <source>
        <dbReference type="PROSITE-ProRule" id="PRU01188"/>
    </source>
</evidence>
<evidence type="ECO:0000256" key="3">
    <source>
        <dbReference type="SAM" id="MobiDB-lite"/>
    </source>
</evidence>